<comment type="function">
    <text evidence="1">Protease subunit of a proteasome-like degradation complex believed to be a general protein degrading machinery.</text>
</comment>
<comment type="catalytic activity">
    <reaction evidence="1">
        <text>ATP-dependent cleavage of peptide bonds with broad specificity.</text>
        <dbReference type="EC" id="3.4.25.2"/>
    </reaction>
</comment>
<comment type="activity regulation">
    <text evidence="1">Allosterically activated by HslU binding.</text>
</comment>
<comment type="subunit">
    <text evidence="1">A double ring-shaped homohexamer of HslV is capped on each side by a ring-shaped HslU homohexamer. The assembly of the HslU/HslV complex is dependent on binding of ATP.</text>
</comment>
<comment type="subcellular location">
    <subcellularLocation>
        <location evidence="1">Cytoplasm</location>
    </subcellularLocation>
</comment>
<comment type="similarity">
    <text evidence="1">Belongs to the peptidase T1B family. HslV subfamily.</text>
</comment>
<organism>
    <name type="scientific">Pseudomonas savastanoi pv. phaseolicola (strain 1448A / Race 6)</name>
    <name type="common">Pseudomonas syringae pv. phaseolicola (strain 1448A / Race 6)</name>
    <dbReference type="NCBI Taxonomy" id="264730"/>
    <lineage>
        <taxon>Bacteria</taxon>
        <taxon>Pseudomonadati</taxon>
        <taxon>Pseudomonadota</taxon>
        <taxon>Gammaproteobacteria</taxon>
        <taxon>Pseudomonadales</taxon>
        <taxon>Pseudomonadaceae</taxon>
        <taxon>Pseudomonas</taxon>
    </lineage>
</organism>
<keyword id="KW-0021">Allosteric enzyme</keyword>
<keyword id="KW-0963">Cytoplasm</keyword>
<keyword id="KW-0378">Hydrolase</keyword>
<keyword id="KW-0479">Metal-binding</keyword>
<keyword id="KW-0645">Protease</keyword>
<keyword id="KW-0915">Sodium</keyword>
<keyword id="KW-0346">Stress response</keyword>
<keyword id="KW-0888">Threonine protease</keyword>
<proteinExistence type="inferred from homology"/>
<reference key="1">
    <citation type="journal article" date="2005" name="J. Bacteriol.">
        <title>Whole-genome sequence analysis of Pseudomonas syringae pv. phaseolicola 1448A reveals divergence among pathovars in genes involved in virulence and transposition.</title>
        <authorList>
            <person name="Joardar V."/>
            <person name="Lindeberg M."/>
            <person name="Jackson R.W."/>
            <person name="Selengut J."/>
            <person name="Dodson R."/>
            <person name="Brinkac L.M."/>
            <person name="Daugherty S.C."/>
            <person name="DeBoy R.T."/>
            <person name="Durkin A.S."/>
            <person name="Gwinn Giglio M."/>
            <person name="Madupu R."/>
            <person name="Nelson W.C."/>
            <person name="Rosovitz M.J."/>
            <person name="Sullivan S.A."/>
            <person name="Crabtree J."/>
            <person name="Creasy T."/>
            <person name="Davidsen T.M."/>
            <person name="Haft D.H."/>
            <person name="Zafar N."/>
            <person name="Zhou L."/>
            <person name="Halpin R."/>
            <person name="Holley T."/>
            <person name="Khouri H.M."/>
            <person name="Feldblyum T.V."/>
            <person name="White O."/>
            <person name="Fraser C.M."/>
            <person name="Chatterjee A.K."/>
            <person name="Cartinhour S."/>
            <person name="Schneider D."/>
            <person name="Mansfield J.W."/>
            <person name="Collmer A."/>
            <person name="Buell R."/>
        </authorList>
    </citation>
    <scope>NUCLEOTIDE SEQUENCE [LARGE SCALE GENOMIC DNA]</scope>
    <source>
        <strain>1448A / Race 6</strain>
    </source>
</reference>
<evidence type="ECO:0000255" key="1">
    <source>
        <dbReference type="HAMAP-Rule" id="MF_00248"/>
    </source>
</evidence>
<sequence length="176" mass="18796">MTTIVSVRRHGKVVMAGDGQVSLGNTVMKGNAKKVRRLYHGEVIAGFAGATADAFTLFERFEAQLEKHQGHLVRAAVELAKDWRTDRSLSRLEAMLAVANKDASLIITGNGDVVEPEDGLIAMGSGGAFAQAAARALLLKTDLSAREIAETSLHIAGDICVFTNHNITIEEQDLVG</sequence>
<accession>Q48PI4</accession>
<feature type="chain" id="PRO_1000012645" description="ATP-dependent protease subunit HslV">
    <location>
        <begin position="1"/>
        <end position="176"/>
    </location>
</feature>
<feature type="active site" evidence="1">
    <location>
        <position position="2"/>
    </location>
</feature>
<feature type="binding site" evidence="1">
    <location>
        <position position="157"/>
    </location>
    <ligand>
        <name>Na(+)</name>
        <dbReference type="ChEBI" id="CHEBI:29101"/>
    </ligand>
</feature>
<feature type="binding site" evidence="1">
    <location>
        <position position="160"/>
    </location>
    <ligand>
        <name>Na(+)</name>
        <dbReference type="ChEBI" id="CHEBI:29101"/>
    </ligand>
</feature>
<feature type="binding site" evidence="1">
    <location>
        <position position="163"/>
    </location>
    <ligand>
        <name>Na(+)</name>
        <dbReference type="ChEBI" id="CHEBI:29101"/>
    </ligand>
</feature>
<gene>
    <name evidence="1" type="primary">hslV</name>
    <name type="ordered locus">PSPPH_0382</name>
</gene>
<protein>
    <recommendedName>
        <fullName evidence="1">ATP-dependent protease subunit HslV</fullName>
        <ecNumber evidence="1">3.4.25.2</ecNumber>
    </recommendedName>
</protein>
<dbReference type="EC" id="3.4.25.2" evidence="1"/>
<dbReference type="EMBL" id="CP000058">
    <property type="protein sequence ID" value="AAZ33344.1"/>
    <property type="molecule type" value="Genomic_DNA"/>
</dbReference>
<dbReference type="RefSeq" id="WP_002551644.1">
    <property type="nucleotide sequence ID" value="NC_005773.3"/>
</dbReference>
<dbReference type="SMR" id="Q48PI4"/>
<dbReference type="MEROPS" id="T01.006"/>
<dbReference type="GeneID" id="69857444"/>
<dbReference type="KEGG" id="psp:PSPPH_0382"/>
<dbReference type="eggNOG" id="COG5405">
    <property type="taxonomic scope" value="Bacteria"/>
</dbReference>
<dbReference type="HOGENOM" id="CLU_093872_1_0_6"/>
<dbReference type="Proteomes" id="UP000000551">
    <property type="component" value="Chromosome"/>
</dbReference>
<dbReference type="GO" id="GO:0009376">
    <property type="term" value="C:HslUV protease complex"/>
    <property type="evidence" value="ECO:0007669"/>
    <property type="project" value="UniProtKB-UniRule"/>
</dbReference>
<dbReference type="GO" id="GO:0005839">
    <property type="term" value="C:proteasome core complex"/>
    <property type="evidence" value="ECO:0007669"/>
    <property type="project" value="InterPro"/>
</dbReference>
<dbReference type="GO" id="GO:0046872">
    <property type="term" value="F:metal ion binding"/>
    <property type="evidence" value="ECO:0007669"/>
    <property type="project" value="UniProtKB-KW"/>
</dbReference>
<dbReference type="GO" id="GO:0004298">
    <property type="term" value="F:threonine-type endopeptidase activity"/>
    <property type="evidence" value="ECO:0007669"/>
    <property type="project" value="UniProtKB-KW"/>
</dbReference>
<dbReference type="GO" id="GO:0051603">
    <property type="term" value="P:proteolysis involved in protein catabolic process"/>
    <property type="evidence" value="ECO:0007669"/>
    <property type="project" value="InterPro"/>
</dbReference>
<dbReference type="CDD" id="cd01913">
    <property type="entry name" value="protease_HslV"/>
    <property type="match status" value="1"/>
</dbReference>
<dbReference type="FunFam" id="3.60.20.10:FF:000002">
    <property type="entry name" value="ATP-dependent protease subunit HslV"/>
    <property type="match status" value="1"/>
</dbReference>
<dbReference type="Gene3D" id="3.60.20.10">
    <property type="entry name" value="Glutamine Phosphoribosylpyrophosphate, subunit 1, domain 1"/>
    <property type="match status" value="1"/>
</dbReference>
<dbReference type="HAMAP" id="MF_00248">
    <property type="entry name" value="HslV"/>
    <property type="match status" value="1"/>
</dbReference>
<dbReference type="InterPro" id="IPR022281">
    <property type="entry name" value="ATP-dep_Prtase_HsIV_su"/>
</dbReference>
<dbReference type="InterPro" id="IPR029055">
    <property type="entry name" value="Ntn_hydrolases_N"/>
</dbReference>
<dbReference type="InterPro" id="IPR001353">
    <property type="entry name" value="Proteasome_sua/b"/>
</dbReference>
<dbReference type="InterPro" id="IPR023333">
    <property type="entry name" value="Proteasome_suB-type"/>
</dbReference>
<dbReference type="NCBIfam" id="TIGR03692">
    <property type="entry name" value="ATP_dep_HslV"/>
    <property type="match status" value="1"/>
</dbReference>
<dbReference type="NCBIfam" id="NF003964">
    <property type="entry name" value="PRK05456.1"/>
    <property type="match status" value="1"/>
</dbReference>
<dbReference type="PANTHER" id="PTHR32194:SF0">
    <property type="entry name" value="ATP-DEPENDENT PROTEASE SUBUNIT HSLV"/>
    <property type="match status" value="1"/>
</dbReference>
<dbReference type="PANTHER" id="PTHR32194">
    <property type="entry name" value="METALLOPROTEASE TLDD"/>
    <property type="match status" value="1"/>
</dbReference>
<dbReference type="Pfam" id="PF00227">
    <property type="entry name" value="Proteasome"/>
    <property type="match status" value="1"/>
</dbReference>
<dbReference type="PIRSF" id="PIRSF039093">
    <property type="entry name" value="HslV"/>
    <property type="match status" value="1"/>
</dbReference>
<dbReference type="SUPFAM" id="SSF56235">
    <property type="entry name" value="N-terminal nucleophile aminohydrolases (Ntn hydrolases)"/>
    <property type="match status" value="1"/>
</dbReference>
<dbReference type="PROSITE" id="PS51476">
    <property type="entry name" value="PROTEASOME_BETA_2"/>
    <property type="match status" value="1"/>
</dbReference>
<name>HSLV_PSE14</name>